<organism>
    <name type="scientific">Dictyostelium discoideum</name>
    <name type="common">Social amoeba</name>
    <dbReference type="NCBI Taxonomy" id="44689"/>
    <lineage>
        <taxon>Eukaryota</taxon>
        <taxon>Amoebozoa</taxon>
        <taxon>Evosea</taxon>
        <taxon>Eumycetozoa</taxon>
        <taxon>Dictyostelia</taxon>
        <taxon>Dictyosteliales</taxon>
        <taxon>Dictyosteliaceae</taxon>
        <taxon>Dictyostelium</taxon>
    </lineage>
</organism>
<evidence type="ECO:0000256" key="1">
    <source>
        <dbReference type="SAM" id="MobiDB-lite"/>
    </source>
</evidence>
<sequence length="509" mass="59496">MSKRNSTKNDIKLSDVGVAQWMDYQIILQEWKIGKLSSEIKNSIVKDMSSLSEFRGQSINANELESMIGDWSIYPITNKFKIIALWKIIENHRNKHNLGYILKSNVLEKTNKSKQNNNGFNGHKGNFSENEIRKTNNYRIIKKQKIEFEKNNKNTIITRKNNNNNNSNNNNNNNNNYNQKSNTTMDNNYSDDDYQNEQNEFEEEDYDSNDDENDSHDENENFNIIKPKTTNQLKRKVSSSFTNNNYHVNNNNNNNDNINNFNSNSNSNTSNNNNNNNSDNNINNNNNNNNNNNNNNNNNNNNNNNNNNNNNNINNNYINNNNNDSWNNQFQNQLMYCNNYQAQYQQLHPNHYQLQYQQQQQNINNNINANNNNNNNNNNNNNNNLNDSTPNNQTNNDLKSSNHSNYDFNYNTNERLSHSPIQTHSSSNNSTPSNQSPTFPSNYISQNANINYNPNQGSMFYPPQQFYVESMFYQQQLQQQQQQQQQIAQQPVSQQNNNVETNQDNVQQQ</sequence>
<proteinExistence type="predicted"/>
<dbReference type="EMBL" id="AAFI02000003">
    <property type="protein sequence ID" value="EAL73311.1"/>
    <property type="molecule type" value="Genomic_DNA"/>
</dbReference>
<dbReference type="RefSeq" id="XP_647249.1">
    <property type="nucleotide sequence ID" value="XM_642157.1"/>
</dbReference>
<dbReference type="GlyGen" id="Q55GD5">
    <property type="glycosylation" value="1 site"/>
</dbReference>
<dbReference type="PaxDb" id="44689-DDB0189487"/>
<dbReference type="EnsemblProtists" id="EAL73311">
    <property type="protein sequence ID" value="EAL73311"/>
    <property type="gene ID" value="DDB_G0267716"/>
</dbReference>
<dbReference type="GeneID" id="8616054"/>
<dbReference type="KEGG" id="ddi:DDB_G0267716"/>
<dbReference type="dictyBase" id="DDB_G0267716"/>
<dbReference type="VEuPathDB" id="AmoebaDB:DDB_G0267716"/>
<dbReference type="eggNOG" id="ENOG502RI36">
    <property type="taxonomic scope" value="Eukaryota"/>
</dbReference>
<dbReference type="HOGENOM" id="CLU_535798_0_0_1"/>
<dbReference type="InParanoid" id="Q55GD5"/>
<dbReference type="OMA" id="EICETKN"/>
<dbReference type="PRO" id="PR:Q55GD5"/>
<dbReference type="Proteomes" id="UP000002195">
    <property type="component" value="Chromosome 1"/>
</dbReference>
<accession>Q55GD5</accession>
<feature type="chain" id="PRO_0000348195" description="Putative uncharacterized protein DDB_G0267716">
    <location>
        <begin position="1"/>
        <end position="509"/>
    </location>
</feature>
<feature type="region of interest" description="Disordered" evidence="1">
    <location>
        <begin position="112"/>
        <end position="131"/>
    </location>
</feature>
<feature type="region of interest" description="Disordered" evidence="1">
    <location>
        <begin position="152"/>
        <end position="325"/>
    </location>
</feature>
<feature type="region of interest" description="Disordered" evidence="1">
    <location>
        <begin position="365"/>
        <end position="457"/>
    </location>
</feature>
<feature type="region of interest" description="Disordered" evidence="1">
    <location>
        <begin position="488"/>
        <end position="509"/>
    </location>
</feature>
<feature type="compositionally biased region" description="Low complexity" evidence="1">
    <location>
        <begin position="116"/>
        <end position="127"/>
    </location>
</feature>
<feature type="compositionally biased region" description="Low complexity" evidence="1">
    <location>
        <begin position="153"/>
        <end position="184"/>
    </location>
</feature>
<feature type="compositionally biased region" description="Acidic residues" evidence="1">
    <location>
        <begin position="189"/>
        <end position="217"/>
    </location>
</feature>
<feature type="compositionally biased region" description="Polar residues" evidence="1">
    <location>
        <begin position="228"/>
        <end position="242"/>
    </location>
</feature>
<feature type="compositionally biased region" description="Low complexity" evidence="1">
    <location>
        <begin position="243"/>
        <end position="325"/>
    </location>
</feature>
<feature type="compositionally biased region" description="Low complexity" evidence="1">
    <location>
        <begin position="365"/>
        <end position="397"/>
    </location>
</feature>
<feature type="compositionally biased region" description="Polar residues" evidence="1">
    <location>
        <begin position="398"/>
        <end position="422"/>
    </location>
</feature>
<feature type="compositionally biased region" description="Low complexity" evidence="1">
    <location>
        <begin position="423"/>
        <end position="442"/>
    </location>
</feature>
<feature type="compositionally biased region" description="Polar residues" evidence="1">
    <location>
        <begin position="443"/>
        <end position="457"/>
    </location>
</feature>
<feature type="compositionally biased region" description="Polar residues" evidence="1">
    <location>
        <begin position="496"/>
        <end position="509"/>
    </location>
</feature>
<reference key="1">
    <citation type="journal article" date="2005" name="Nature">
        <title>The genome of the social amoeba Dictyostelium discoideum.</title>
        <authorList>
            <person name="Eichinger L."/>
            <person name="Pachebat J.A."/>
            <person name="Gloeckner G."/>
            <person name="Rajandream M.A."/>
            <person name="Sucgang R."/>
            <person name="Berriman M."/>
            <person name="Song J."/>
            <person name="Olsen R."/>
            <person name="Szafranski K."/>
            <person name="Xu Q."/>
            <person name="Tunggal B."/>
            <person name="Kummerfeld S."/>
            <person name="Madera M."/>
            <person name="Konfortov B.A."/>
            <person name="Rivero F."/>
            <person name="Bankier A.T."/>
            <person name="Lehmann R."/>
            <person name="Hamlin N."/>
            <person name="Davies R."/>
            <person name="Gaudet P."/>
            <person name="Fey P."/>
            <person name="Pilcher K."/>
            <person name="Chen G."/>
            <person name="Saunders D."/>
            <person name="Sodergren E.J."/>
            <person name="Davis P."/>
            <person name="Kerhornou A."/>
            <person name="Nie X."/>
            <person name="Hall N."/>
            <person name="Anjard C."/>
            <person name="Hemphill L."/>
            <person name="Bason N."/>
            <person name="Farbrother P."/>
            <person name="Desany B."/>
            <person name="Just E."/>
            <person name="Morio T."/>
            <person name="Rost R."/>
            <person name="Churcher C.M."/>
            <person name="Cooper J."/>
            <person name="Haydock S."/>
            <person name="van Driessche N."/>
            <person name="Cronin A."/>
            <person name="Goodhead I."/>
            <person name="Muzny D.M."/>
            <person name="Mourier T."/>
            <person name="Pain A."/>
            <person name="Lu M."/>
            <person name="Harper D."/>
            <person name="Lindsay R."/>
            <person name="Hauser H."/>
            <person name="James K.D."/>
            <person name="Quiles M."/>
            <person name="Madan Babu M."/>
            <person name="Saito T."/>
            <person name="Buchrieser C."/>
            <person name="Wardroper A."/>
            <person name="Felder M."/>
            <person name="Thangavelu M."/>
            <person name="Johnson D."/>
            <person name="Knights A."/>
            <person name="Loulseged H."/>
            <person name="Mungall K.L."/>
            <person name="Oliver K."/>
            <person name="Price C."/>
            <person name="Quail M.A."/>
            <person name="Urushihara H."/>
            <person name="Hernandez J."/>
            <person name="Rabbinowitsch E."/>
            <person name="Steffen D."/>
            <person name="Sanders M."/>
            <person name="Ma J."/>
            <person name="Kohara Y."/>
            <person name="Sharp S."/>
            <person name="Simmonds M.N."/>
            <person name="Spiegler S."/>
            <person name="Tivey A."/>
            <person name="Sugano S."/>
            <person name="White B."/>
            <person name="Walker D."/>
            <person name="Woodward J.R."/>
            <person name="Winckler T."/>
            <person name="Tanaka Y."/>
            <person name="Shaulsky G."/>
            <person name="Schleicher M."/>
            <person name="Weinstock G.M."/>
            <person name="Rosenthal A."/>
            <person name="Cox E.C."/>
            <person name="Chisholm R.L."/>
            <person name="Gibbs R.A."/>
            <person name="Loomis W.F."/>
            <person name="Platzer M."/>
            <person name="Kay R.R."/>
            <person name="Williams J.G."/>
            <person name="Dear P.H."/>
            <person name="Noegel A.A."/>
            <person name="Barrell B.G."/>
            <person name="Kuspa A."/>
        </authorList>
    </citation>
    <scope>NUCLEOTIDE SEQUENCE [LARGE SCALE GENOMIC DNA]</scope>
    <source>
        <strain>AX4</strain>
    </source>
</reference>
<name>Y9487_DICDI</name>
<protein>
    <recommendedName>
        <fullName>Putative uncharacterized protein DDB_G0267716</fullName>
    </recommendedName>
</protein>
<keyword id="KW-1185">Reference proteome</keyword>
<gene>
    <name type="ORF">DDB_G0267716</name>
</gene>